<sequence>MKLQLVAVGTKMPDWVQTGFTEYLRRFPKDMPFELIEIPAGKRGKNADIKRILDKEGEQMLAAAGKNRIVTLDIPGKPWDTPQLANELERWKQDGRDVSLLIGGPEGLSPACKAAAEQSWSLSALTLPHPLVRVLVAESLYRAWSITTNHPYHRE</sequence>
<feature type="chain" id="PRO_1000082811" description="Ribosomal RNA large subunit methyltransferase H">
    <location>
        <begin position="1"/>
        <end position="155"/>
    </location>
</feature>
<feature type="binding site" evidence="1">
    <location>
        <position position="72"/>
    </location>
    <ligand>
        <name>S-adenosyl-L-methionine</name>
        <dbReference type="ChEBI" id="CHEBI:59789"/>
    </ligand>
</feature>
<feature type="binding site" evidence="1">
    <location>
        <position position="103"/>
    </location>
    <ligand>
        <name>S-adenosyl-L-methionine</name>
        <dbReference type="ChEBI" id="CHEBI:59789"/>
    </ligand>
</feature>
<feature type="binding site" evidence="1">
    <location>
        <begin position="122"/>
        <end position="127"/>
    </location>
    <ligand>
        <name>S-adenosyl-L-methionine</name>
        <dbReference type="ChEBI" id="CHEBI:59789"/>
    </ligand>
</feature>
<accession>A9MKD5</accession>
<proteinExistence type="inferred from homology"/>
<gene>
    <name evidence="1" type="primary">rlmH</name>
    <name type="ordered locus">SARI_02291</name>
</gene>
<reference key="1">
    <citation type="submission" date="2007-11" db="EMBL/GenBank/DDBJ databases">
        <authorList>
            <consortium name="The Salmonella enterica serovar Arizonae Genome Sequencing Project"/>
            <person name="McClelland M."/>
            <person name="Sanderson E.K."/>
            <person name="Porwollik S."/>
            <person name="Spieth J."/>
            <person name="Clifton W.S."/>
            <person name="Fulton R."/>
            <person name="Chunyan W."/>
            <person name="Wollam A."/>
            <person name="Shah N."/>
            <person name="Pepin K."/>
            <person name="Bhonagiri V."/>
            <person name="Nash W."/>
            <person name="Johnson M."/>
            <person name="Thiruvilangam P."/>
            <person name="Wilson R."/>
        </authorList>
    </citation>
    <scope>NUCLEOTIDE SEQUENCE [LARGE SCALE GENOMIC DNA]</scope>
    <source>
        <strain>ATCC BAA-731 / CDC346-86 / RSK2980</strain>
    </source>
</reference>
<evidence type="ECO:0000255" key="1">
    <source>
        <dbReference type="HAMAP-Rule" id="MF_00658"/>
    </source>
</evidence>
<comment type="function">
    <text evidence="1">Specifically methylates the pseudouridine at position 1915 (m3Psi1915) in 23S rRNA.</text>
</comment>
<comment type="catalytic activity">
    <reaction evidence="1">
        <text>pseudouridine(1915) in 23S rRNA + S-adenosyl-L-methionine = N(3)-methylpseudouridine(1915) in 23S rRNA + S-adenosyl-L-homocysteine + H(+)</text>
        <dbReference type="Rhea" id="RHEA:42752"/>
        <dbReference type="Rhea" id="RHEA-COMP:10221"/>
        <dbReference type="Rhea" id="RHEA-COMP:10222"/>
        <dbReference type="ChEBI" id="CHEBI:15378"/>
        <dbReference type="ChEBI" id="CHEBI:57856"/>
        <dbReference type="ChEBI" id="CHEBI:59789"/>
        <dbReference type="ChEBI" id="CHEBI:65314"/>
        <dbReference type="ChEBI" id="CHEBI:74486"/>
        <dbReference type="EC" id="2.1.1.177"/>
    </reaction>
</comment>
<comment type="subunit">
    <text evidence="1">Homodimer.</text>
</comment>
<comment type="subcellular location">
    <subcellularLocation>
        <location evidence="1">Cytoplasm</location>
    </subcellularLocation>
</comment>
<comment type="similarity">
    <text evidence="1">Belongs to the RNA methyltransferase RlmH family.</text>
</comment>
<keyword id="KW-0963">Cytoplasm</keyword>
<keyword id="KW-0489">Methyltransferase</keyword>
<keyword id="KW-1185">Reference proteome</keyword>
<keyword id="KW-0698">rRNA processing</keyword>
<keyword id="KW-0949">S-adenosyl-L-methionine</keyword>
<keyword id="KW-0808">Transferase</keyword>
<protein>
    <recommendedName>
        <fullName evidence="1">Ribosomal RNA large subunit methyltransferase H</fullName>
        <ecNumber evidence="1">2.1.1.177</ecNumber>
    </recommendedName>
    <alternativeName>
        <fullName evidence="1">23S rRNA (pseudouridine1915-N3)-methyltransferase</fullName>
    </alternativeName>
    <alternativeName>
        <fullName evidence="1">23S rRNA m3Psi1915 methyltransferase</fullName>
    </alternativeName>
    <alternativeName>
        <fullName evidence="1">rRNA (pseudouridine-N3-)-methyltransferase RlmH</fullName>
    </alternativeName>
</protein>
<dbReference type="EC" id="2.1.1.177" evidence="1"/>
<dbReference type="EMBL" id="CP000880">
    <property type="protein sequence ID" value="ABX22154.1"/>
    <property type="molecule type" value="Genomic_DNA"/>
</dbReference>
<dbReference type="SMR" id="A9MKD5"/>
<dbReference type="STRING" id="41514.SARI_02291"/>
<dbReference type="KEGG" id="ses:SARI_02291"/>
<dbReference type="HOGENOM" id="CLU_100552_1_0_6"/>
<dbReference type="Proteomes" id="UP000002084">
    <property type="component" value="Chromosome"/>
</dbReference>
<dbReference type="GO" id="GO:0005737">
    <property type="term" value="C:cytoplasm"/>
    <property type="evidence" value="ECO:0007669"/>
    <property type="project" value="UniProtKB-SubCell"/>
</dbReference>
<dbReference type="GO" id="GO:0070038">
    <property type="term" value="F:rRNA (pseudouridine-N3-)-methyltransferase activity"/>
    <property type="evidence" value="ECO:0007669"/>
    <property type="project" value="UniProtKB-UniRule"/>
</dbReference>
<dbReference type="CDD" id="cd18081">
    <property type="entry name" value="RlmH-like"/>
    <property type="match status" value="1"/>
</dbReference>
<dbReference type="FunFam" id="3.40.1280.10:FF:000004">
    <property type="entry name" value="Ribosomal RNA large subunit methyltransferase H"/>
    <property type="match status" value="1"/>
</dbReference>
<dbReference type="Gene3D" id="3.40.1280.10">
    <property type="match status" value="1"/>
</dbReference>
<dbReference type="HAMAP" id="MF_00658">
    <property type="entry name" value="23SrRNA_methyltr_H"/>
    <property type="match status" value="1"/>
</dbReference>
<dbReference type="InterPro" id="IPR029028">
    <property type="entry name" value="Alpha/beta_knot_MTases"/>
</dbReference>
<dbReference type="InterPro" id="IPR003742">
    <property type="entry name" value="RlmH-like"/>
</dbReference>
<dbReference type="InterPro" id="IPR029026">
    <property type="entry name" value="tRNA_m1G_MTases_N"/>
</dbReference>
<dbReference type="NCBIfam" id="NF000984">
    <property type="entry name" value="PRK00103.1-1"/>
    <property type="match status" value="1"/>
</dbReference>
<dbReference type="NCBIfam" id="NF000986">
    <property type="entry name" value="PRK00103.1-4"/>
    <property type="match status" value="1"/>
</dbReference>
<dbReference type="NCBIfam" id="TIGR00246">
    <property type="entry name" value="tRNA_RlmH_YbeA"/>
    <property type="match status" value="1"/>
</dbReference>
<dbReference type="PANTHER" id="PTHR33603">
    <property type="entry name" value="METHYLTRANSFERASE"/>
    <property type="match status" value="1"/>
</dbReference>
<dbReference type="PANTHER" id="PTHR33603:SF1">
    <property type="entry name" value="RIBOSOMAL RNA LARGE SUBUNIT METHYLTRANSFERASE H"/>
    <property type="match status" value="1"/>
</dbReference>
<dbReference type="Pfam" id="PF02590">
    <property type="entry name" value="SPOUT_MTase"/>
    <property type="match status" value="1"/>
</dbReference>
<dbReference type="PIRSF" id="PIRSF004505">
    <property type="entry name" value="MT_bac"/>
    <property type="match status" value="1"/>
</dbReference>
<dbReference type="SUPFAM" id="SSF75217">
    <property type="entry name" value="alpha/beta knot"/>
    <property type="match status" value="1"/>
</dbReference>
<name>RLMH_SALAR</name>
<organism>
    <name type="scientific">Salmonella arizonae (strain ATCC BAA-731 / CDC346-86 / RSK2980)</name>
    <dbReference type="NCBI Taxonomy" id="41514"/>
    <lineage>
        <taxon>Bacteria</taxon>
        <taxon>Pseudomonadati</taxon>
        <taxon>Pseudomonadota</taxon>
        <taxon>Gammaproteobacteria</taxon>
        <taxon>Enterobacterales</taxon>
        <taxon>Enterobacteriaceae</taxon>
        <taxon>Salmonella</taxon>
    </lineage>
</organism>